<dbReference type="EC" id="3.6.1.29" evidence="3"/>
<dbReference type="EC" id="3.9.1.-" evidence="3"/>
<dbReference type="EC" id="3.6.2.1" evidence="3"/>
<dbReference type="EC" id="2.7.7.51" evidence="4"/>
<dbReference type="EMBL" id="AB019228">
    <property type="protein sequence ID" value="BAA96915.1"/>
    <property type="molecule type" value="Genomic_DNA"/>
</dbReference>
<dbReference type="EMBL" id="CP002688">
    <property type="protein sequence ID" value="AED97022.1"/>
    <property type="molecule type" value="Genomic_DNA"/>
</dbReference>
<dbReference type="EMBL" id="CP002688">
    <property type="protein sequence ID" value="AED97023.1"/>
    <property type="molecule type" value="Genomic_DNA"/>
</dbReference>
<dbReference type="EMBL" id="BT003103">
    <property type="protein sequence ID" value="AAO24535.1"/>
    <property type="molecule type" value="mRNA"/>
</dbReference>
<dbReference type="EMBL" id="AK228164">
    <property type="protein sequence ID" value="BAF00120.1"/>
    <property type="molecule type" value="mRNA"/>
</dbReference>
<dbReference type="RefSeq" id="NP_200632.2">
    <molecule id="F4KEV7-1"/>
    <property type="nucleotide sequence ID" value="NM_125209.3"/>
</dbReference>
<dbReference type="RefSeq" id="NP_974957.1">
    <molecule id="F4KEV7-2"/>
    <property type="nucleotide sequence ID" value="NM_203228.2"/>
</dbReference>
<dbReference type="SMR" id="F4KEV7"/>
<dbReference type="FunCoup" id="F4KEV7">
    <property type="interactions" value="1234"/>
</dbReference>
<dbReference type="IntAct" id="F4KEV7">
    <property type="interactions" value="1"/>
</dbReference>
<dbReference type="STRING" id="3702.F4KEV7"/>
<dbReference type="MetOSite" id="F4KEV7"/>
<dbReference type="PaxDb" id="3702-AT5G58240.1"/>
<dbReference type="ProteomicsDB" id="230078">
    <molecule id="F4KEV7-1"/>
</dbReference>
<dbReference type="EnsemblPlants" id="AT5G58240.1">
    <molecule id="F4KEV7-1"/>
    <property type="protein sequence ID" value="AT5G58240.1"/>
    <property type="gene ID" value="AT5G58240"/>
</dbReference>
<dbReference type="EnsemblPlants" id="AT5G58240.2">
    <molecule id="F4KEV7-2"/>
    <property type="protein sequence ID" value="AT5G58240.2"/>
    <property type="gene ID" value="AT5G58240"/>
</dbReference>
<dbReference type="GeneID" id="835936"/>
<dbReference type="Gramene" id="AT5G58240.1">
    <molecule id="F4KEV7-1"/>
    <property type="protein sequence ID" value="AT5G58240.1"/>
    <property type="gene ID" value="AT5G58240"/>
</dbReference>
<dbReference type="Gramene" id="AT5G58240.2">
    <molecule id="F4KEV7-2"/>
    <property type="protein sequence ID" value="AT5G58240.2"/>
    <property type="gene ID" value="AT5G58240"/>
</dbReference>
<dbReference type="KEGG" id="ath:AT5G58240"/>
<dbReference type="Araport" id="AT5G58240"/>
<dbReference type="TAIR" id="AT5G58240">
    <property type="gene designation" value="FHIT"/>
</dbReference>
<dbReference type="eggNOG" id="KOG3379">
    <property type="taxonomic scope" value="Eukaryota"/>
</dbReference>
<dbReference type="InParanoid" id="F4KEV7"/>
<dbReference type="OMA" id="DAIYGMM"/>
<dbReference type="OrthoDB" id="680339at2759"/>
<dbReference type="BRENDA" id="3.6.1.29">
    <property type="organism ID" value="399"/>
</dbReference>
<dbReference type="SABIO-RK" id="F4KEV7"/>
<dbReference type="PRO" id="PR:F4KEV7"/>
<dbReference type="Proteomes" id="UP000006548">
    <property type="component" value="Chromosome 5"/>
</dbReference>
<dbReference type="ExpressionAtlas" id="F4KEV7">
    <property type="expression patterns" value="baseline and differential"/>
</dbReference>
<dbReference type="GO" id="GO:0043530">
    <property type="term" value="F:adenosine 5'-monophosphoramidase activity"/>
    <property type="evidence" value="ECO:0000314"/>
    <property type="project" value="TAIR"/>
</dbReference>
<dbReference type="GO" id="GO:0047627">
    <property type="term" value="F:adenylylsulfatase activity"/>
    <property type="evidence" value="ECO:0000314"/>
    <property type="project" value="TAIR"/>
</dbReference>
<dbReference type="GO" id="GO:0047352">
    <property type="term" value="F:adenylylsulfate-ammonia adenylyltransferase activity"/>
    <property type="evidence" value="ECO:0000314"/>
    <property type="project" value="UniProtKB"/>
</dbReference>
<dbReference type="GO" id="GO:0047710">
    <property type="term" value="F:bis(5'-adenosyl)-triphosphatase activity"/>
    <property type="evidence" value="ECO:0007669"/>
    <property type="project" value="UniProtKB-EC"/>
</dbReference>
<dbReference type="GO" id="GO:0000166">
    <property type="term" value="F:nucleotide binding"/>
    <property type="evidence" value="ECO:0007669"/>
    <property type="project" value="UniProtKB-KW"/>
</dbReference>
<dbReference type="CDD" id="cd01275">
    <property type="entry name" value="FHIT"/>
    <property type="match status" value="1"/>
</dbReference>
<dbReference type="FunFam" id="3.30.428.10:FF:000011">
    <property type="entry name" value="Fragile histidine triad"/>
    <property type="match status" value="1"/>
</dbReference>
<dbReference type="Gene3D" id="3.30.428.10">
    <property type="entry name" value="HIT-like"/>
    <property type="match status" value="1"/>
</dbReference>
<dbReference type="InterPro" id="IPR051884">
    <property type="entry name" value="Bis(5'-adenosyl)-TPase_reg"/>
</dbReference>
<dbReference type="InterPro" id="IPR039383">
    <property type="entry name" value="FHIT"/>
</dbReference>
<dbReference type="InterPro" id="IPR019808">
    <property type="entry name" value="Histidine_triad_CS"/>
</dbReference>
<dbReference type="InterPro" id="IPR011146">
    <property type="entry name" value="HIT-like"/>
</dbReference>
<dbReference type="InterPro" id="IPR036265">
    <property type="entry name" value="HIT-like_sf"/>
</dbReference>
<dbReference type="PANTHER" id="PTHR46243">
    <property type="entry name" value="BIS(5'-ADENOSYL)-TRIPHOSPHATASE"/>
    <property type="match status" value="1"/>
</dbReference>
<dbReference type="PANTHER" id="PTHR46243:SF1">
    <property type="entry name" value="BIS(5'-ADENOSYL)-TRIPHOSPHATASE"/>
    <property type="match status" value="1"/>
</dbReference>
<dbReference type="Pfam" id="PF01230">
    <property type="entry name" value="HIT"/>
    <property type="match status" value="1"/>
</dbReference>
<dbReference type="SUPFAM" id="SSF54197">
    <property type="entry name" value="HIT-like"/>
    <property type="match status" value="1"/>
</dbReference>
<dbReference type="PROSITE" id="PS00892">
    <property type="entry name" value="HIT_1"/>
    <property type="match status" value="1"/>
</dbReference>
<dbReference type="PROSITE" id="PS51084">
    <property type="entry name" value="HIT_2"/>
    <property type="match status" value="1"/>
</dbReference>
<organism>
    <name type="scientific">Arabidopsis thaliana</name>
    <name type="common">Mouse-ear cress</name>
    <dbReference type="NCBI Taxonomy" id="3702"/>
    <lineage>
        <taxon>Eukaryota</taxon>
        <taxon>Viridiplantae</taxon>
        <taxon>Streptophyta</taxon>
        <taxon>Embryophyta</taxon>
        <taxon>Tracheophyta</taxon>
        <taxon>Spermatophyta</taxon>
        <taxon>Magnoliopsida</taxon>
        <taxon>eudicotyledons</taxon>
        <taxon>Gunneridae</taxon>
        <taxon>Pentapetalae</taxon>
        <taxon>rosids</taxon>
        <taxon>malvids</taxon>
        <taxon>Brassicales</taxon>
        <taxon>Brassicaceae</taxon>
        <taxon>Camelineae</taxon>
        <taxon>Arabidopsis</taxon>
    </lineage>
</organism>
<protein>
    <recommendedName>
        <fullName evidence="7">Bifunctional bis(5'-adenosyl)-triphosphatase/adenylylsulfatase FHIT</fullName>
        <ecNumber evidence="3">3.6.1.29</ecNumber>
    </recommendedName>
    <alternativeName>
        <fullName evidence="7">Adenosine 5'-monophosphoramidase FHIT</fullName>
        <ecNumber evidence="3">3.9.1.-</ecNumber>
    </alternativeName>
    <alternativeName>
        <fullName>Adenylylsulfatase</fullName>
        <ecNumber evidence="3">3.6.2.1</ecNumber>
    </alternativeName>
    <alternativeName>
        <fullName>Adenylylsulfate-ammonia adenylyltransferase</fullName>
        <ecNumber evidence="4">2.7.7.51</ecNumber>
    </alternativeName>
    <alternativeName>
        <fullName evidence="5">Fragile histidine triad protein</fullName>
    </alternativeName>
</protein>
<feature type="chain" id="PRO_0000436745" description="Bifunctional bis(5'-adenosyl)-triphosphatase/adenylylsulfatase FHIT">
    <location>
        <begin position="1"/>
        <end position="180"/>
    </location>
</feature>
<feature type="domain" description="HIT" evidence="2">
    <location>
        <begin position="27"/>
        <end position="134"/>
    </location>
</feature>
<feature type="short sequence motif" description="Histidine triad motif" evidence="2">
    <location>
        <begin position="119"/>
        <end position="123"/>
    </location>
</feature>
<feature type="active site" description="Tele-AMP-histidine intermediate" evidence="1">
    <location>
        <position position="121"/>
    </location>
</feature>
<feature type="binding site" evidence="1">
    <location>
        <position position="52"/>
    </location>
    <ligand>
        <name>substrate</name>
    </ligand>
</feature>
<feature type="binding site" evidence="1">
    <location>
        <position position="108"/>
    </location>
    <ligand>
        <name>substrate</name>
    </ligand>
</feature>
<feature type="binding site" evidence="1">
    <location>
        <position position="123"/>
    </location>
    <ligand>
        <name>substrate</name>
    </ligand>
</feature>
<feature type="splice variant" id="VSP_058413" description="In isoform 2.">
    <location>
        <begin position="1"/>
        <end position="20"/>
    </location>
</feature>
<feature type="sequence conflict" description="In Ref. 3; AAO24535 and 4; BAF00120." evidence="6" ref="3 4">
    <original>A</original>
    <variation>G</variation>
    <location>
        <position position="59"/>
    </location>
</feature>
<reference key="1">
    <citation type="journal article" date="2000" name="DNA Res.">
        <title>Structural analysis of Arabidopsis thaliana chromosome 5. X. Sequence features of the regions of 3,076,755 bp covered by sixty P1 and TAC clones.</title>
        <authorList>
            <person name="Sato S."/>
            <person name="Nakamura Y."/>
            <person name="Kaneko T."/>
            <person name="Katoh T."/>
            <person name="Asamizu E."/>
            <person name="Kotani H."/>
            <person name="Tabata S."/>
        </authorList>
    </citation>
    <scope>NUCLEOTIDE SEQUENCE [LARGE SCALE GENOMIC DNA]</scope>
    <source>
        <strain>cv. Columbia</strain>
    </source>
</reference>
<reference key="2">
    <citation type="journal article" date="2017" name="Plant J.">
        <title>Araport11: a complete reannotation of the Arabidopsis thaliana reference genome.</title>
        <authorList>
            <person name="Cheng C.Y."/>
            <person name="Krishnakumar V."/>
            <person name="Chan A.P."/>
            <person name="Thibaud-Nissen F."/>
            <person name="Schobel S."/>
            <person name="Town C.D."/>
        </authorList>
    </citation>
    <scope>GENOME REANNOTATION</scope>
    <source>
        <strain>cv. Columbia</strain>
    </source>
</reference>
<reference key="3">
    <citation type="journal article" date="2003" name="Science">
        <title>Empirical analysis of transcriptional activity in the Arabidopsis genome.</title>
        <authorList>
            <person name="Yamada K."/>
            <person name="Lim J."/>
            <person name="Dale J.M."/>
            <person name="Chen H."/>
            <person name="Shinn P."/>
            <person name="Palm C.J."/>
            <person name="Southwick A.M."/>
            <person name="Wu H.C."/>
            <person name="Kim C.J."/>
            <person name="Nguyen M."/>
            <person name="Pham P.K."/>
            <person name="Cheuk R.F."/>
            <person name="Karlin-Newmann G."/>
            <person name="Liu S.X."/>
            <person name="Lam B."/>
            <person name="Sakano H."/>
            <person name="Wu T."/>
            <person name="Yu G."/>
            <person name="Miranda M."/>
            <person name="Quach H.L."/>
            <person name="Tripp M."/>
            <person name="Chang C.H."/>
            <person name="Lee J.M."/>
            <person name="Toriumi M.J."/>
            <person name="Chan M.M."/>
            <person name="Tang C.C."/>
            <person name="Onodera C.S."/>
            <person name="Deng J.M."/>
            <person name="Akiyama K."/>
            <person name="Ansari Y."/>
            <person name="Arakawa T."/>
            <person name="Banh J."/>
            <person name="Banno F."/>
            <person name="Bowser L."/>
            <person name="Brooks S.Y."/>
            <person name="Carninci P."/>
            <person name="Chao Q."/>
            <person name="Choy N."/>
            <person name="Enju A."/>
            <person name="Goldsmith A.D."/>
            <person name="Gurjal M."/>
            <person name="Hansen N.F."/>
            <person name="Hayashizaki Y."/>
            <person name="Johnson-Hopson C."/>
            <person name="Hsuan V.W."/>
            <person name="Iida K."/>
            <person name="Karnes M."/>
            <person name="Khan S."/>
            <person name="Koesema E."/>
            <person name="Ishida J."/>
            <person name="Jiang P.X."/>
            <person name="Jones T."/>
            <person name="Kawai J."/>
            <person name="Kamiya A."/>
            <person name="Meyers C."/>
            <person name="Nakajima M."/>
            <person name="Narusaka M."/>
            <person name="Seki M."/>
            <person name="Sakurai T."/>
            <person name="Satou M."/>
            <person name="Tamse R."/>
            <person name="Vaysberg M."/>
            <person name="Wallender E.K."/>
            <person name="Wong C."/>
            <person name="Yamamura Y."/>
            <person name="Yuan S."/>
            <person name="Shinozaki K."/>
            <person name="Davis R.W."/>
            <person name="Theologis A."/>
            <person name="Ecker J.R."/>
        </authorList>
    </citation>
    <scope>NUCLEOTIDE SEQUENCE [LARGE SCALE MRNA]</scope>
    <source>
        <strain>cv. Columbia</strain>
    </source>
</reference>
<reference key="4">
    <citation type="submission" date="2006-07" db="EMBL/GenBank/DDBJ databases">
        <title>Large-scale analysis of RIKEN Arabidopsis full-length (RAFL) cDNAs.</title>
        <authorList>
            <person name="Totoki Y."/>
            <person name="Seki M."/>
            <person name="Ishida J."/>
            <person name="Nakajima M."/>
            <person name="Enju A."/>
            <person name="Kamiya A."/>
            <person name="Narusaka M."/>
            <person name="Shin-i T."/>
            <person name="Nakagawa M."/>
            <person name="Sakamoto N."/>
            <person name="Oishi K."/>
            <person name="Kohara Y."/>
            <person name="Kobayashi M."/>
            <person name="Toyoda A."/>
            <person name="Sakaki Y."/>
            <person name="Sakurai T."/>
            <person name="Iida K."/>
            <person name="Akiyama K."/>
            <person name="Satou M."/>
            <person name="Toyoda T."/>
            <person name="Konagaya A."/>
            <person name="Carninci P."/>
            <person name="Kawai J."/>
            <person name="Hayashizaki Y."/>
            <person name="Shinozaki K."/>
        </authorList>
    </citation>
    <scope>NUCLEOTIDE SEQUENCE [LARGE SCALE MRNA]</scope>
    <source>
        <strain>cv. Columbia</strain>
    </source>
</reference>
<reference key="5">
    <citation type="journal article" date="2008" name="FEBS Lett.">
        <title>Fhit proteins can also recognize substrates other than dinucleoside polyphosphates.</title>
        <authorList>
            <person name="Guranowski A."/>
            <person name="Wojdyla A.M."/>
            <person name="Pietrowska-Borek M."/>
            <person name="Bieganowski P."/>
            <person name="Khurs E.N."/>
            <person name="Cliff M.J."/>
            <person name="Blackburn G.M."/>
            <person name="Blaziak D."/>
            <person name="Stec W.J."/>
        </authorList>
    </citation>
    <scope>FUNCTION</scope>
    <scope>CATALYTIC ACTIVITY</scope>
    <scope>BIOPHYSICOCHEMICAL PROPERTIES</scope>
</reference>
<reference key="6">
    <citation type="journal article" date="2015" name="Biosci. Rep.">
        <title>Adenylylsulfate-ammonia adenylyltransferase activity is another inherent property of Fhit proteins.</title>
        <authorList>
            <person name="Wojdyla-Mamon A.M."/>
            <person name="Guranowski A."/>
        </authorList>
    </citation>
    <scope>FUNCTION</scope>
    <scope>CATALYTIC ACTIVITY</scope>
</reference>
<proteinExistence type="evidence at protein level"/>
<evidence type="ECO:0000250" key="1">
    <source>
        <dbReference type="UniProtKB" id="P49789"/>
    </source>
</evidence>
<evidence type="ECO:0000255" key="2">
    <source>
        <dbReference type="PROSITE-ProRule" id="PRU00464"/>
    </source>
</evidence>
<evidence type="ECO:0000269" key="3">
    <source>
    </source>
</evidence>
<evidence type="ECO:0000269" key="4">
    <source>
    </source>
</evidence>
<evidence type="ECO:0000303" key="5">
    <source>
    </source>
</evidence>
<evidence type="ECO:0000305" key="6"/>
<evidence type="ECO:0000305" key="7">
    <source>
    </source>
</evidence>
<evidence type="ECO:0000312" key="8">
    <source>
        <dbReference type="Araport" id="AT5G58240"/>
    </source>
</evidence>
<evidence type="ECO:0000312" key="9">
    <source>
        <dbReference type="EMBL" id="BAA96915.1"/>
    </source>
</evidence>
<accession>F4KEV7</accession>
<accession>Q84WL2</accession>
<accession>Q9LVM4</accession>
<sequence length="180" mass="20400">MLNLQVTGKTILSSIRCQRKMSSTCSSYAFGPYKIDPREVFYATPLSYAMVNLRPLLPAHVLVCPRRLVPRFTDLTADETSDLWLTAQKVGSKLETFHNASSLTLAIQDGPQAGQTVPHVHIHILPRKGGDFEKNDEIYDALDEKEKELKQKLDLDKDRVDRSIQEMADEASQYRSLFDC</sequence>
<comment type="function">
    <text evidence="3 4">Possesses dinucleoside triphosphate hydrolase activity (PubMed:18694747). Cleaves P(1)-P(3)-bis(5'-adenosyl) triphosphate (Ap3A) to yield AMP and ADP (PubMed:18694747). Exhibits adenylylsulfatase activity, hydrolyzing adenosine 5'-phosphosulfate to yield AMP and sulfate (PubMed:18694747). Exhibits adenosine 5'-monophosphoramidase activity, hydrolyzing purine nucleotide phosphoramidates with a single phosphate group such as adenosine 5'monophosphoramidate (AMP-NH2) to yield AMP and NH2 (PubMed:18694747). Exhibits adenylylsulfate-ammonia adenylyltransferase, catalyzing the ammonolysis of adenosine 5'-phosphosulfate resulting in the formation of adenosine 5'-phosphoramidate (PubMed:26181368).</text>
</comment>
<comment type="catalytic activity">
    <reaction evidence="3">
        <text>P(1),P(3)-bis(5'-adenosyl) triphosphate + H2O = AMP + ADP + 2 H(+)</text>
        <dbReference type="Rhea" id="RHEA:13893"/>
        <dbReference type="ChEBI" id="CHEBI:15377"/>
        <dbReference type="ChEBI" id="CHEBI:15378"/>
        <dbReference type="ChEBI" id="CHEBI:58529"/>
        <dbReference type="ChEBI" id="CHEBI:456215"/>
        <dbReference type="ChEBI" id="CHEBI:456216"/>
        <dbReference type="EC" id="3.6.1.29"/>
    </reaction>
</comment>
<comment type="catalytic activity">
    <reaction evidence="3">
        <text>adenosine 5'-phosphosulfate + H2O = sulfate + AMP + 2 H(+)</text>
        <dbReference type="Rhea" id="RHEA:17041"/>
        <dbReference type="ChEBI" id="CHEBI:15377"/>
        <dbReference type="ChEBI" id="CHEBI:15378"/>
        <dbReference type="ChEBI" id="CHEBI:16189"/>
        <dbReference type="ChEBI" id="CHEBI:58243"/>
        <dbReference type="ChEBI" id="CHEBI:456215"/>
        <dbReference type="EC" id="3.6.2.1"/>
    </reaction>
</comment>
<comment type="catalytic activity">
    <reaction evidence="4">
        <text>adenosine 5'-phosphosulfate + NH4(+) = adenosine 5'-phosphoramidate + sulfate + 2 H(+)</text>
        <dbReference type="Rhea" id="RHEA:19197"/>
        <dbReference type="ChEBI" id="CHEBI:15378"/>
        <dbReference type="ChEBI" id="CHEBI:16189"/>
        <dbReference type="ChEBI" id="CHEBI:28938"/>
        <dbReference type="ChEBI" id="CHEBI:57890"/>
        <dbReference type="ChEBI" id="CHEBI:58243"/>
        <dbReference type="EC" id="2.7.7.51"/>
    </reaction>
</comment>
<comment type="catalytic activity">
    <reaction evidence="3">
        <text>adenosine 5'-phosphoramidate + H2O = AMP + NH4(+)</text>
        <dbReference type="Rhea" id="RHEA:67916"/>
        <dbReference type="ChEBI" id="CHEBI:15377"/>
        <dbReference type="ChEBI" id="CHEBI:28938"/>
        <dbReference type="ChEBI" id="CHEBI:57890"/>
        <dbReference type="ChEBI" id="CHEBI:456215"/>
    </reaction>
</comment>
<comment type="biophysicochemical properties">
    <kinetics>
        <KM evidence="3">3 uM for adenosine 5'-phosphoramidate (at pH 6.8)</KM>
    </kinetics>
</comment>
<comment type="alternative products">
    <event type="alternative splicing"/>
    <isoform>
        <id>F4KEV7-1</id>
        <name>1</name>
        <sequence type="displayed"/>
    </isoform>
    <isoform>
        <id>F4KEV7-2</id>
        <name>2</name>
        <sequence type="described" ref="VSP_058413"/>
    </isoform>
</comment>
<keyword id="KW-0025">Alternative splicing</keyword>
<keyword id="KW-0378">Hydrolase</keyword>
<keyword id="KW-0547">Nucleotide-binding</keyword>
<keyword id="KW-1185">Reference proteome</keyword>
<keyword id="KW-0808">Transferase</keyword>
<gene>
    <name evidence="5" type="primary">FHIT</name>
    <name evidence="8" type="ordered locus">At5g58240</name>
    <name evidence="9" type="ORF">MCK7.11</name>
</gene>
<name>FHIT_ARATH</name>